<sequence>MEKIAFVFSHAPHGTSFGKEGLDVILGVSSIIKKISLFFIGDGVLQILKHSKSENILARNYTSSFRILSIYDIKNFYCCKSSLIDRGLYSHNQFILKVNILNSYFFRIKLDDHDAIINF</sequence>
<name>TUSC_BUCAP</name>
<gene>
    <name evidence="1" type="primary">tusC</name>
    <name type="ordered locus">BUsg_512</name>
</gene>
<keyword id="KW-0963">Cytoplasm</keyword>
<keyword id="KW-0819">tRNA processing</keyword>
<protein>
    <recommendedName>
        <fullName evidence="1">Protein TusC</fullName>
    </recommendedName>
    <alternativeName>
        <fullName evidence="1">tRNA 2-thiouridine synthesizing protein C</fullName>
    </alternativeName>
</protein>
<organism>
    <name type="scientific">Buchnera aphidicola subsp. Schizaphis graminum (strain Sg)</name>
    <dbReference type="NCBI Taxonomy" id="198804"/>
    <lineage>
        <taxon>Bacteria</taxon>
        <taxon>Pseudomonadati</taxon>
        <taxon>Pseudomonadota</taxon>
        <taxon>Gammaproteobacteria</taxon>
        <taxon>Enterobacterales</taxon>
        <taxon>Erwiniaceae</taxon>
        <taxon>Buchnera</taxon>
    </lineage>
</organism>
<proteinExistence type="inferred from homology"/>
<evidence type="ECO:0000255" key="1">
    <source>
        <dbReference type="HAMAP-Rule" id="MF_00389"/>
    </source>
</evidence>
<comment type="function">
    <text evidence="1">Part of a sulfur-relay system required for 2-thiolation of 5-methylaminomethyl-2-thiouridine (mnm(5)s(2)U) at tRNA wobble positions.</text>
</comment>
<comment type="subunit">
    <text evidence="1">Heterohexamer, formed by a dimer of trimers. The hexameric TusBCD complex contains 2 copies each of TusB, TusC and TusD. The TusBCD complex interacts with TusE.</text>
</comment>
<comment type="subcellular location">
    <subcellularLocation>
        <location evidence="1">Cytoplasm</location>
    </subcellularLocation>
</comment>
<comment type="similarity">
    <text evidence="1">Belongs to the DsrF/TusC family.</text>
</comment>
<reference key="1">
    <citation type="journal article" date="2002" name="Science">
        <title>50 million years of genomic stasis in endosymbiotic bacteria.</title>
        <authorList>
            <person name="Tamas I."/>
            <person name="Klasson L."/>
            <person name="Canbaeck B."/>
            <person name="Naeslund A.K."/>
            <person name="Eriksson A.-S."/>
            <person name="Wernegreen J.J."/>
            <person name="Sandstroem J.P."/>
            <person name="Moran N.A."/>
            <person name="Andersson S.G.E."/>
        </authorList>
    </citation>
    <scope>NUCLEOTIDE SEQUENCE [LARGE SCALE GENOMIC DNA]</scope>
    <source>
        <strain>Sg</strain>
    </source>
</reference>
<dbReference type="EMBL" id="AE013218">
    <property type="protein sequence ID" value="AAM68055.1"/>
    <property type="molecule type" value="Genomic_DNA"/>
</dbReference>
<dbReference type="RefSeq" id="WP_044006062.1">
    <property type="nucleotide sequence ID" value="NC_004061.1"/>
</dbReference>
<dbReference type="SMR" id="Q8K945"/>
<dbReference type="STRING" id="198804.BUsg_512"/>
<dbReference type="GeneID" id="93003987"/>
<dbReference type="KEGG" id="bas:BUsg_512"/>
<dbReference type="eggNOG" id="COG2923">
    <property type="taxonomic scope" value="Bacteria"/>
</dbReference>
<dbReference type="HOGENOM" id="CLU_155943_1_0_6"/>
<dbReference type="Proteomes" id="UP000000416">
    <property type="component" value="Chromosome"/>
</dbReference>
<dbReference type="GO" id="GO:0005737">
    <property type="term" value="C:cytoplasm"/>
    <property type="evidence" value="ECO:0007669"/>
    <property type="project" value="UniProtKB-SubCell"/>
</dbReference>
<dbReference type="GO" id="GO:0008033">
    <property type="term" value="P:tRNA processing"/>
    <property type="evidence" value="ECO:0007669"/>
    <property type="project" value="UniProtKB-UniRule"/>
</dbReference>
<dbReference type="Gene3D" id="3.40.1260.10">
    <property type="entry name" value="DsrEFH-like"/>
    <property type="match status" value="1"/>
</dbReference>
<dbReference type="HAMAP" id="MF_00389">
    <property type="entry name" value="Thiourid_synth_C"/>
    <property type="match status" value="1"/>
</dbReference>
<dbReference type="InterPro" id="IPR027396">
    <property type="entry name" value="DsrEFH-like"/>
</dbReference>
<dbReference type="InterPro" id="IPR003787">
    <property type="entry name" value="Sulphur_relay_DsrE/F-like"/>
</dbReference>
<dbReference type="InterPro" id="IPR037450">
    <property type="entry name" value="Sulphur_relay_TusC"/>
</dbReference>
<dbReference type="InterPro" id="IPR017462">
    <property type="entry name" value="Sulphur_relay_TusC/DsrF"/>
</dbReference>
<dbReference type="NCBIfam" id="NF001238">
    <property type="entry name" value="PRK00211.1"/>
    <property type="match status" value="1"/>
</dbReference>
<dbReference type="NCBIfam" id="TIGR03010">
    <property type="entry name" value="sulf_tusC_dsrF"/>
    <property type="match status" value="1"/>
</dbReference>
<dbReference type="PANTHER" id="PTHR38780">
    <property type="entry name" value="PROTEIN TUSC"/>
    <property type="match status" value="1"/>
</dbReference>
<dbReference type="PANTHER" id="PTHR38780:SF1">
    <property type="entry name" value="PROTEIN TUSC"/>
    <property type="match status" value="1"/>
</dbReference>
<dbReference type="Pfam" id="PF02635">
    <property type="entry name" value="DsrE"/>
    <property type="match status" value="1"/>
</dbReference>
<dbReference type="SUPFAM" id="SSF75169">
    <property type="entry name" value="DsrEFH-like"/>
    <property type="match status" value="1"/>
</dbReference>
<feature type="chain" id="PRO_0000214881" description="Protein TusC">
    <location>
        <begin position="1"/>
        <end position="119"/>
    </location>
</feature>
<accession>Q8K945</accession>